<protein>
    <recommendedName>
        <fullName evidence="1">DNA-directed RNA polymerase subunit beta'</fullName>
        <shortName evidence="1">RNAP subunit beta'</shortName>
        <ecNumber evidence="1">2.7.7.6</ecNumber>
    </recommendedName>
    <alternativeName>
        <fullName evidence="1">RNA polymerase subunit beta'</fullName>
    </alternativeName>
    <alternativeName>
        <fullName evidence="1">Transcriptase subunit beta'</fullName>
    </alternativeName>
</protein>
<keyword id="KW-0240">DNA-directed RNA polymerase</keyword>
<keyword id="KW-0460">Magnesium</keyword>
<keyword id="KW-0479">Metal-binding</keyword>
<keyword id="KW-0548">Nucleotidyltransferase</keyword>
<keyword id="KW-1185">Reference proteome</keyword>
<keyword id="KW-0804">Transcription</keyword>
<keyword id="KW-0808">Transferase</keyword>
<keyword id="KW-0862">Zinc</keyword>
<proteinExistence type="inferred from homology"/>
<comment type="function">
    <text evidence="1">DNA-dependent RNA polymerase catalyzes the transcription of DNA into RNA using the four ribonucleoside triphosphates as substrates.</text>
</comment>
<comment type="catalytic activity">
    <reaction evidence="1">
        <text>RNA(n) + a ribonucleoside 5'-triphosphate = RNA(n+1) + diphosphate</text>
        <dbReference type="Rhea" id="RHEA:21248"/>
        <dbReference type="Rhea" id="RHEA-COMP:14527"/>
        <dbReference type="Rhea" id="RHEA-COMP:17342"/>
        <dbReference type="ChEBI" id="CHEBI:33019"/>
        <dbReference type="ChEBI" id="CHEBI:61557"/>
        <dbReference type="ChEBI" id="CHEBI:140395"/>
        <dbReference type="EC" id="2.7.7.6"/>
    </reaction>
</comment>
<comment type="cofactor">
    <cofactor evidence="1">
        <name>Mg(2+)</name>
        <dbReference type="ChEBI" id="CHEBI:18420"/>
    </cofactor>
    <text evidence="1">Binds 1 Mg(2+) ion per subunit.</text>
</comment>
<comment type="cofactor">
    <cofactor evidence="1">
        <name>Zn(2+)</name>
        <dbReference type="ChEBI" id="CHEBI:29105"/>
    </cofactor>
    <text evidence="1">Binds 2 Zn(2+) ions per subunit.</text>
</comment>
<comment type="subunit">
    <text evidence="1">The RNAP catalytic core consists of 2 alpha, 1 beta, 1 beta' and 1 omega subunit. When a sigma factor is associated with the core the holoenzyme is formed, which can initiate transcription.</text>
</comment>
<comment type="similarity">
    <text evidence="1">Belongs to the RNA polymerase beta' chain family.</text>
</comment>
<dbReference type="EC" id="2.7.7.6" evidence="1"/>
<dbReference type="EMBL" id="CP000613">
    <property type="protein sequence ID" value="ACI98133.1"/>
    <property type="molecule type" value="Genomic_DNA"/>
</dbReference>
<dbReference type="RefSeq" id="WP_012565925.1">
    <property type="nucleotide sequence ID" value="NC_011420.2"/>
</dbReference>
<dbReference type="SMR" id="B6IRP7"/>
<dbReference type="STRING" id="414684.RC1_0702"/>
<dbReference type="KEGG" id="rce:RC1_0702"/>
<dbReference type="eggNOG" id="COG0086">
    <property type="taxonomic scope" value="Bacteria"/>
</dbReference>
<dbReference type="HOGENOM" id="CLU_000524_3_1_5"/>
<dbReference type="OrthoDB" id="9815296at2"/>
<dbReference type="Proteomes" id="UP000001591">
    <property type="component" value="Chromosome"/>
</dbReference>
<dbReference type="GO" id="GO:0000428">
    <property type="term" value="C:DNA-directed RNA polymerase complex"/>
    <property type="evidence" value="ECO:0007669"/>
    <property type="project" value="UniProtKB-KW"/>
</dbReference>
<dbReference type="GO" id="GO:0003677">
    <property type="term" value="F:DNA binding"/>
    <property type="evidence" value="ECO:0007669"/>
    <property type="project" value="UniProtKB-UniRule"/>
</dbReference>
<dbReference type="GO" id="GO:0003899">
    <property type="term" value="F:DNA-directed RNA polymerase activity"/>
    <property type="evidence" value="ECO:0007669"/>
    <property type="project" value="UniProtKB-UniRule"/>
</dbReference>
<dbReference type="GO" id="GO:0000287">
    <property type="term" value="F:magnesium ion binding"/>
    <property type="evidence" value="ECO:0007669"/>
    <property type="project" value="UniProtKB-UniRule"/>
</dbReference>
<dbReference type="GO" id="GO:0008270">
    <property type="term" value="F:zinc ion binding"/>
    <property type="evidence" value="ECO:0007669"/>
    <property type="project" value="UniProtKB-UniRule"/>
</dbReference>
<dbReference type="GO" id="GO:0006351">
    <property type="term" value="P:DNA-templated transcription"/>
    <property type="evidence" value="ECO:0007669"/>
    <property type="project" value="UniProtKB-UniRule"/>
</dbReference>
<dbReference type="CDD" id="cd02655">
    <property type="entry name" value="RNAP_beta'_C"/>
    <property type="match status" value="1"/>
</dbReference>
<dbReference type="CDD" id="cd01609">
    <property type="entry name" value="RNAP_beta'_N"/>
    <property type="match status" value="1"/>
</dbReference>
<dbReference type="FunFam" id="1.10.40.90:FF:000001">
    <property type="entry name" value="DNA-directed RNA polymerase subunit beta"/>
    <property type="match status" value="1"/>
</dbReference>
<dbReference type="FunFam" id="4.10.860.120:FF:000001">
    <property type="entry name" value="DNA-directed RNA polymerase subunit beta"/>
    <property type="match status" value="1"/>
</dbReference>
<dbReference type="Gene3D" id="1.10.132.30">
    <property type="match status" value="1"/>
</dbReference>
<dbReference type="Gene3D" id="1.10.150.390">
    <property type="match status" value="1"/>
</dbReference>
<dbReference type="Gene3D" id="1.10.1790.20">
    <property type="match status" value="1"/>
</dbReference>
<dbReference type="Gene3D" id="1.10.40.90">
    <property type="match status" value="1"/>
</dbReference>
<dbReference type="Gene3D" id="2.40.40.20">
    <property type="match status" value="1"/>
</dbReference>
<dbReference type="Gene3D" id="2.40.50.100">
    <property type="match status" value="3"/>
</dbReference>
<dbReference type="Gene3D" id="4.10.860.120">
    <property type="entry name" value="RNA polymerase II, clamp domain"/>
    <property type="match status" value="1"/>
</dbReference>
<dbReference type="Gene3D" id="1.10.274.100">
    <property type="entry name" value="RNA polymerase Rpb1, domain 3"/>
    <property type="match status" value="2"/>
</dbReference>
<dbReference type="HAMAP" id="MF_01322">
    <property type="entry name" value="RNApol_bact_RpoC"/>
    <property type="match status" value="1"/>
</dbReference>
<dbReference type="InterPro" id="IPR045867">
    <property type="entry name" value="DNA-dir_RpoC_beta_prime"/>
</dbReference>
<dbReference type="InterPro" id="IPR012754">
    <property type="entry name" value="DNA-dir_RpoC_beta_prime_bact"/>
</dbReference>
<dbReference type="InterPro" id="IPR000722">
    <property type="entry name" value="RNA_pol_asu"/>
</dbReference>
<dbReference type="InterPro" id="IPR006592">
    <property type="entry name" value="RNA_pol_N"/>
</dbReference>
<dbReference type="InterPro" id="IPR007080">
    <property type="entry name" value="RNA_pol_Rpb1_1"/>
</dbReference>
<dbReference type="InterPro" id="IPR007066">
    <property type="entry name" value="RNA_pol_Rpb1_3"/>
</dbReference>
<dbReference type="InterPro" id="IPR042102">
    <property type="entry name" value="RNA_pol_Rpb1_3_sf"/>
</dbReference>
<dbReference type="InterPro" id="IPR007083">
    <property type="entry name" value="RNA_pol_Rpb1_4"/>
</dbReference>
<dbReference type="InterPro" id="IPR007081">
    <property type="entry name" value="RNA_pol_Rpb1_5"/>
</dbReference>
<dbReference type="InterPro" id="IPR044893">
    <property type="entry name" value="RNA_pol_Rpb1_clamp_domain"/>
</dbReference>
<dbReference type="InterPro" id="IPR038120">
    <property type="entry name" value="Rpb1_funnel_sf"/>
</dbReference>
<dbReference type="NCBIfam" id="TIGR02386">
    <property type="entry name" value="rpoC_TIGR"/>
    <property type="match status" value="1"/>
</dbReference>
<dbReference type="PANTHER" id="PTHR19376">
    <property type="entry name" value="DNA-DIRECTED RNA POLYMERASE"/>
    <property type="match status" value="1"/>
</dbReference>
<dbReference type="PANTHER" id="PTHR19376:SF54">
    <property type="entry name" value="DNA-DIRECTED RNA POLYMERASE SUBUNIT BETA"/>
    <property type="match status" value="1"/>
</dbReference>
<dbReference type="Pfam" id="PF04997">
    <property type="entry name" value="RNA_pol_Rpb1_1"/>
    <property type="match status" value="1"/>
</dbReference>
<dbReference type="Pfam" id="PF00623">
    <property type="entry name" value="RNA_pol_Rpb1_2"/>
    <property type="match status" value="1"/>
</dbReference>
<dbReference type="Pfam" id="PF04983">
    <property type="entry name" value="RNA_pol_Rpb1_3"/>
    <property type="match status" value="1"/>
</dbReference>
<dbReference type="Pfam" id="PF05000">
    <property type="entry name" value="RNA_pol_Rpb1_4"/>
    <property type="match status" value="1"/>
</dbReference>
<dbReference type="Pfam" id="PF04998">
    <property type="entry name" value="RNA_pol_Rpb1_5"/>
    <property type="match status" value="1"/>
</dbReference>
<dbReference type="SMART" id="SM00663">
    <property type="entry name" value="RPOLA_N"/>
    <property type="match status" value="1"/>
</dbReference>
<dbReference type="SUPFAM" id="SSF64484">
    <property type="entry name" value="beta and beta-prime subunits of DNA dependent RNA-polymerase"/>
    <property type="match status" value="1"/>
</dbReference>
<evidence type="ECO:0000255" key="1">
    <source>
        <dbReference type="HAMAP-Rule" id="MF_01322"/>
    </source>
</evidence>
<reference key="1">
    <citation type="submission" date="2007-03" db="EMBL/GenBank/DDBJ databases">
        <title>Genome sequence of Rhodospirillum centenum.</title>
        <authorList>
            <person name="Touchman J.W."/>
            <person name="Bauer C."/>
            <person name="Blankenship R.E."/>
        </authorList>
    </citation>
    <scope>NUCLEOTIDE SEQUENCE [LARGE SCALE GENOMIC DNA]</scope>
    <source>
        <strain>ATCC 51521 / SW</strain>
    </source>
</reference>
<accession>B6IRP7</accession>
<name>RPOC_RHOCS</name>
<feature type="chain" id="PRO_1000141790" description="DNA-directed RNA polymerase subunit beta'">
    <location>
        <begin position="1"/>
        <end position="1430"/>
    </location>
</feature>
<feature type="binding site" evidence="1">
    <location>
        <position position="70"/>
    </location>
    <ligand>
        <name>Zn(2+)</name>
        <dbReference type="ChEBI" id="CHEBI:29105"/>
        <label>1</label>
    </ligand>
</feature>
<feature type="binding site" evidence="1">
    <location>
        <position position="72"/>
    </location>
    <ligand>
        <name>Zn(2+)</name>
        <dbReference type="ChEBI" id="CHEBI:29105"/>
        <label>1</label>
    </ligand>
</feature>
<feature type="binding site" evidence="1">
    <location>
        <position position="85"/>
    </location>
    <ligand>
        <name>Zn(2+)</name>
        <dbReference type="ChEBI" id="CHEBI:29105"/>
        <label>1</label>
    </ligand>
</feature>
<feature type="binding site" evidence="1">
    <location>
        <position position="88"/>
    </location>
    <ligand>
        <name>Zn(2+)</name>
        <dbReference type="ChEBI" id="CHEBI:29105"/>
        <label>1</label>
    </ligand>
</feature>
<feature type="binding site" evidence="1">
    <location>
        <position position="495"/>
    </location>
    <ligand>
        <name>Mg(2+)</name>
        <dbReference type="ChEBI" id="CHEBI:18420"/>
    </ligand>
</feature>
<feature type="binding site" evidence="1">
    <location>
        <position position="497"/>
    </location>
    <ligand>
        <name>Mg(2+)</name>
        <dbReference type="ChEBI" id="CHEBI:18420"/>
    </ligand>
</feature>
<feature type="binding site" evidence="1">
    <location>
        <position position="499"/>
    </location>
    <ligand>
        <name>Mg(2+)</name>
        <dbReference type="ChEBI" id="CHEBI:18420"/>
    </ligand>
</feature>
<feature type="binding site" evidence="1">
    <location>
        <position position="838"/>
    </location>
    <ligand>
        <name>Zn(2+)</name>
        <dbReference type="ChEBI" id="CHEBI:29105"/>
        <label>2</label>
    </ligand>
</feature>
<feature type="binding site" evidence="1">
    <location>
        <position position="912"/>
    </location>
    <ligand>
        <name>Zn(2+)</name>
        <dbReference type="ChEBI" id="CHEBI:29105"/>
        <label>2</label>
    </ligand>
</feature>
<feature type="binding site" evidence="1">
    <location>
        <position position="919"/>
    </location>
    <ligand>
        <name>Zn(2+)</name>
        <dbReference type="ChEBI" id="CHEBI:29105"/>
        <label>2</label>
    </ligand>
</feature>
<feature type="binding site" evidence="1">
    <location>
        <position position="922"/>
    </location>
    <ligand>
        <name>Zn(2+)</name>
        <dbReference type="ChEBI" id="CHEBI:29105"/>
        <label>2</label>
    </ligand>
</feature>
<organism>
    <name type="scientific">Rhodospirillum centenum (strain ATCC 51521 / SW)</name>
    <dbReference type="NCBI Taxonomy" id="414684"/>
    <lineage>
        <taxon>Bacteria</taxon>
        <taxon>Pseudomonadati</taxon>
        <taxon>Pseudomonadota</taxon>
        <taxon>Alphaproteobacteria</taxon>
        <taxon>Rhodospirillales</taxon>
        <taxon>Rhodospirillaceae</taxon>
        <taxon>Rhodospirillum</taxon>
    </lineage>
</organism>
<sequence length="1430" mass="159414">MNELMNIFGQPQGPQSFDQIRISIASPERIRSWSFGEIKKPETINYRTFKPERDGLFCARIFGPIKDYECLCGKYKRMKYRGIICEKCGVEVTLSKVRRERMGHIELASPVAHIWFLKSLPSRIGLLLDMTLKDLERILYFENYVVIEPGLTDLKLHELLSEDQLLDKQDKFGEDAFTAKIGAEAMKDLLANLDLIEEKATCREELKETASEAKRKKLVKRLKLIEAFLGPSQEVEDVAAYERFEGYKERIERPDARPLFKIFPDATRPEWMILEVVPVIPPELRPLVPLDGGRFATSDLNDLYRRVINRNNRLKRLIELKAPDIIVRNEKRMLQEAVDALFDNGRRGRVITGANKRPLKSISDMLKGKQGRFRQNLLGKRVDYSGRSVIVVGPELKLHQCGLPKKMALELFKPFIYAKLELYGLASTIKAAKRMVEKERPEVWDILEEVIREHPVMLNRAPTLHRLGIQAFEPTLIEGKAIQLHPLVCTAFNADFDGDQMAVHVPLSLEAQLEARVLMMSTNNILSPASGRPIIVPSQDIVLGLYYITMELPGMVGEGMAFGTIGEIEHALASKAVSLHAKIQCRYKTVDDEGNPITVRVTTTPGRMLLSEILPRHKAIKFDLINRLLTKKEIGNIIDVVYRHCGQKETVIFADRLMKLGFSNAFKAGISFGKDDMVIPAEKEILIREAQDRVKEYEQQYLDGLITQGEKYNKVVDVWSETTEKVASAMMKVIEQPKPGFGVNSVYMMAHSGARGSAAQIKQLAGMRGLMAKPSGEIIETPIISNFKEGLTVLEYFNSTHGARKGLADTALKTANSGYLTRRLVDVAQDAIIVENDCGTTRGITMKAVIDGGEIVVPLGERILGRTVSVDIIHPLTGEMLVAAGDMITEREVEVIERAGIDSVHIRSVLTCETRDGVCAQCYGRDLARGTRVNMGEAVGVIAAQSIGEPGTQLTMRTFHIGGAAQRGAEQSFIEATLDAKVMVKNRNLVMNSEGVPVVMGRNCELALLDEQGRERARHRVPYGAKLNKALAADGAMIKKGDRLAEWDPYTLPILTEREGIANYVDLVEGVSVREVVDEATGISSKVVTDWRQQPRGADLRPRITLRDETGEVVKLPNGLEARYYMSVDAILSVENGARVRAGDVLARIPRESSKTRDITGGLPRVAELFEARRPKDFAIISDIDGRVEFGKDYKTKRRIVVRNDETGEEKEYLIPKGKHISVQEGDYVQKGDLLMDGNPVPHDILAVMGVESLANYLINEIQDVYRLQGVKINDKHIEVIVRQMLQKVEITDPGDTTLLAGEQVDRTEFEEENRLVQQRMNEGEQDLRFAIAKPVLQGITKASLQTRSFISAASFQETTRVLTEAAVQGKVDNLEGLKENVIVGRLIPAGTGSVVNRLKQIAAERDKALQLADGVDETPALADGGEAAA</sequence>
<gene>
    <name evidence="1" type="primary">rpoC</name>
    <name type="ordered locus">RC1_0702</name>
</gene>